<feature type="chain" id="PRO_0000179781" description="Putative N-acetylmannosamine-6-phosphate 2-epimerase">
    <location>
        <begin position="1"/>
        <end position="231"/>
    </location>
</feature>
<protein>
    <recommendedName>
        <fullName evidence="1">Putative N-acetylmannosamine-6-phosphate 2-epimerase</fullName>
        <ecNumber evidence="1">5.1.3.9</ecNumber>
    </recommendedName>
    <alternativeName>
        <fullName evidence="1">ManNAc-6-P epimerase</fullName>
    </alternativeName>
</protein>
<evidence type="ECO:0000255" key="1">
    <source>
        <dbReference type="HAMAP-Rule" id="MF_01235"/>
    </source>
</evidence>
<comment type="function">
    <text evidence="1">Converts N-acetylmannosamine-6-phosphate (ManNAc-6-P) to N-acetylglucosamine-6-phosphate (GlcNAc-6-P).</text>
</comment>
<comment type="catalytic activity">
    <reaction evidence="1">
        <text>an N-acyl-D-glucosamine 6-phosphate = an N-acyl-D-mannosamine 6-phosphate</text>
        <dbReference type="Rhea" id="RHEA:23932"/>
        <dbReference type="ChEBI" id="CHEBI:57599"/>
        <dbReference type="ChEBI" id="CHEBI:57666"/>
        <dbReference type="EC" id="5.1.3.9"/>
    </reaction>
</comment>
<comment type="pathway">
    <text evidence="1">Amino-sugar metabolism; N-acetylneuraminate degradation; D-fructose 6-phosphate from N-acetylneuraminate: step 3/5.</text>
</comment>
<comment type="similarity">
    <text evidence="1">Belongs to the NanE family.</text>
</comment>
<gene>
    <name evidence="1" type="primary">nanE</name>
    <name type="ordered locus">lin2933</name>
</gene>
<proteinExistence type="inferred from homology"/>
<organism>
    <name type="scientific">Listeria innocua serovar 6a (strain ATCC BAA-680 / CLIP 11262)</name>
    <dbReference type="NCBI Taxonomy" id="272626"/>
    <lineage>
        <taxon>Bacteria</taxon>
        <taxon>Bacillati</taxon>
        <taxon>Bacillota</taxon>
        <taxon>Bacilli</taxon>
        <taxon>Bacillales</taxon>
        <taxon>Listeriaceae</taxon>
        <taxon>Listeria</taxon>
    </lineage>
</organism>
<accession>Q926V7</accession>
<name>NANE_LISIN</name>
<reference key="1">
    <citation type="journal article" date="2001" name="Science">
        <title>Comparative genomics of Listeria species.</title>
        <authorList>
            <person name="Glaser P."/>
            <person name="Frangeul L."/>
            <person name="Buchrieser C."/>
            <person name="Rusniok C."/>
            <person name="Amend A."/>
            <person name="Baquero F."/>
            <person name="Berche P."/>
            <person name="Bloecker H."/>
            <person name="Brandt P."/>
            <person name="Chakraborty T."/>
            <person name="Charbit A."/>
            <person name="Chetouani F."/>
            <person name="Couve E."/>
            <person name="de Daruvar A."/>
            <person name="Dehoux P."/>
            <person name="Domann E."/>
            <person name="Dominguez-Bernal G."/>
            <person name="Duchaud E."/>
            <person name="Durant L."/>
            <person name="Dussurget O."/>
            <person name="Entian K.-D."/>
            <person name="Fsihi H."/>
            <person name="Garcia-del Portillo F."/>
            <person name="Garrido P."/>
            <person name="Gautier L."/>
            <person name="Goebel W."/>
            <person name="Gomez-Lopez N."/>
            <person name="Hain T."/>
            <person name="Hauf J."/>
            <person name="Jackson D."/>
            <person name="Jones L.-M."/>
            <person name="Kaerst U."/>
            <person name="Kreft J."/>
            <person name="Kuhn M."/>
            <person name="Kunst F."/>
            <person name="Kurapkat G."/>
            <person name="Madueno E."/>
            <person name="Maitournam A."/>
            <person name="Mata Vicente J."/>
            <person name="Ng E."/>
            <person name="Nedjari H."/>
            <person name="Nordsiek G."/>
            <person name="Novella S."/>
            <person name="de Pablos B."/>
            <person name="Perez-Diaz J.-C."/>
            <person name="Purcell R."/>
            <person name="Remmel B."/>
            <person name="Rose M."/>
            <person name="Schlueter T."/>
            <person name="Simoes N."/>
            <person name="Tierrez A."/>
            <person name="Vazquez-Boland J.-A."/>
            <person name="Voss H."/>
            <person name="Wehland J."/>
            <person name="Cossart P."/>
        </authorList>
    </citation>
    <scope>NUCLEOTIDE SEQUENCE [LARGE SCALE GENOMIC DNA]</scope>
    <source>
        <strain>ATCC BAA-680 / CLIP 11262</strain>
    </source>
</reference>
<sequence length="231" mass="25350">MGNSVMEKIKGGLVVSCQALEDEPLHSAFIMSKMALAAVQGGAVGIRANTAKDIRAIQSEVDVPIIGIYKKDYDDSDVFITPTLKEVREICETGVEIVAMDATTRKRPHNEDLKDILSAIRKEFPNTLFMADTGSIEDVYYADSLGFDLIGTTLYGYTEETANKNISDHDFSHMKEVLKSTKRPVIAEGKIDSPSKARQVLTLGCYAVVVGGAVTRPQEITTRFTNEIKKI</sequence>
<dbReference type="EC" id="5.1.3.9" evidence="1"/>
<dbReference type="EMBL" id="AL596174">
    <property type="protein sequence ID" value="CAC98158.1"/>
    <property type="molecule type" value="Genomic_DNA"/>
</dbReference>
<dbReference type="PIR" id="AF1798">
    <property type="entry name" value="AF1798"/>
</dbReference>
<dbReference type="RefSeq" id="WP_010991457.1">
    <property type="nucleotide sequence ID" value="NC_003212.1"/>
</dbReference>
<dbReference type="SMR" id="Q926V7"/>
<dbReference type="STRING" id="272626.gene:17567319"/>
<dbReference type="GeneID" id="93236209"/>
<dbReference type="KEGG" id="lin:lin2933"/>
<dbReference type="eggNOG" id="COG3010">
    <property type="taxonomic scope" value="Bacteria"/>
</dbReference>
<dbReference type="HOGENOM" id="CLU_086300_1_0_9"/>
<dbReference type="OrthoDB" id="9781704at2"/>
<dbReference type="UniPathway" id="UPA00629">
    <property type="reaction ID" value="UER00682"/>
</dbReference>
<dbReference type="Proteomes" id="UP000002513">
    <property type="component" value="Chromosome"/>
</dbReference>
<dbReference type="GO" id="GO:0005829">
    <property type="term" value="C:cytosol"/>
    <property type="evidence" value="ECO:0007669"/>
    <property type="project" value="TreeGrafter"/>
</dbReference>
<dbReference type="GO" id="GO:0047465">
    <property type="term" value="F:N-acylglucosamine-6-phosphate 2-epimerase activity"/>
    <property type="evidence" value="ECO:0007669"/>
    <property type="project" value="UniProtKB-EC"/>
</dbReference>
<dbReference type="GO" id="GO:0005975">
    <property type="term" value="P:carbohydrate metabolic process"/>
    <property type="evidence" value="ECO:0007669"/>
    <property type="project" value="UniProtKB-UniRule"/>
</dbReference>
<dbReference type="GO" id="GO:0006053">
    <property type="term" value="P:N-acetylmannosamine catabolic process"/>
    <property type="evidence" value="ECO:0007669"/>
    <property type="project" value="TreeGrafter"/>
</dbReference>
<dbReference type="GO" id="GO:0019262">
    <property type="term" value="P:N-acetylneuraminate catabolic process"/>
    <property type="evidence" value="ECO:0007669"/>
    <property type="project" value="UniProtKB-UniRule"/>
</dbReference>
<dbReference type="CDD" id="cd04729">
    <property type="entry name" value="NanE"/>
    <property type="match status" value="1"/>
</dbReference>
<dbReference type="FunFam" id="3.20.20.70:FF:000035">
    <property type="entry name" value="Putative N-acetylmannosamine-6-phosphate 2-epimerase"/>
    <property type="match status" value="1"/>
</dbReference>
<dbReference type="Gene3D" id="3.20.20.70">
    <property type="entry name" value="Aldolase class I"/>
    <property type="match status" value="1"/>
</dbReference>
<dbReference type="HAMAP" id="MF_01235">
    <property type="entry name" value="ManNAc6P_epimer"/>
    <property type="match status" value="1"/>
</dbReference>
<dbReference type="InterPro" id="IPR013785">
    <property type="entry name" value="Aldolase_TIM"/>
</dbReference>
<dbReference type="InterPro" id="IPR007260">
    <property type="entry name" value="NanE"/>
</dbReference>
<dbReference type="InterPro" id="IPR011060">
    <property type="entry name" value="RibuloseP-bd_barrel"/>
</dbReference>
<dbReference type="NCBIfam" id="NF002231">
    <property type="entry name" value="PRK01130.1"/>
    <property type="match status" value="1"/>
</dbReference>
<dbReference type="PANTHER" id="PTHR36204">
    <property type="entry name" value="N-ACETYLMANNOSAMINE-6-PHOSPHATE 2-EPIMERASE-RELATED"/>
    <property type="match status" value="1"/>
</dbReference>
<dbReference type="PANTHER" id="PTHR36204:SF1">
    <property type="entry name" value="N-ACETYLMANNOSAMINE-6-PHOSPHATE 2-EPIMERASE-RELATED"/>
    <property type="match status" value="1"/>
</dbReference>
<dbReference type="Pfam" id="PF04131">
    <property type="entry name" value="NanE"/>
    <property type="match status" value="1"/>
</dbReference>
<dbReference type="SUPFAM" id="SSF51366">
    <property type="entry name" value="Ribulose-phoshate binding barrel"/>
    <property type="match status" value="1"/>
</dbReference>
<keyword id="KW-0119">Carbohydrate metabolism</keyword>
<keyword id="KW-0413">Isomerase</keyword>